<proteinExistence type="inferred from homology"/>
<gene>
    <name evidence="1" type="primary">rnc</name>
    <name type="ordered locus">STH1453</name>
</gene>
<sequence length="235" mass="26180">MAVSVLDPGRRAWCAEALGYEFRDESLLLEALTHTTYANEHPRARANERLEFLGDSVLGMVIAAHLYERYPDLPEGELTKIRAAVVCEPSLAERARVLGIGRHMRFGRGEAVSGRDRDSTLSDAFEAVVGALYLDGGLEAAQRFVLRELGQLVEAARQGLVRVDYKTQLQEQLQRQGAAAPQYRLLVEEGPAHLRRFQVGVYFEGRLLGTGWGRNKKEAEQEAARQALMPEHHSG</sequence>
<keyword id="KW-0963">Cytoplasm</keyword>
<keyword id="KW-0255">Endonuclease</keyword>
<keyword id="KW-0378">Hydrolase</keyword>
<keyword id="KW-0460">Magnesium</keyword>
<keyword id="KW-0479">Metal-binding</keyword>
<keyword id="KW-0507">mRNA processing</keyword>
<keyword id="KW-0540">Nuclease</keyword>
<keyword id="KW-1185">Reference proteome</keyword>
<keyword id="KW-0694">RNA-binding</keyword>
<keyword id="KW-0698">rRNA processing</keyword>
<keyword id="KW-0699">rRNA-binding</keyword>
<keyword id="KW-0819">tRNA processing</keyword>
<comment type="function">
    <text evidence="1">Digests double-stranded RNA. Involved in the processing of primary rRNA transcript to yield the immediate precursors to the large and small rRNAs (23S and 16S). Processes some mRNAs, and tRNAs when they are encoded in the rRNA operon. Processes pre-crRNA and tracrRNA of type II CRISPR loci if present in the organism.</text>
</comment>
<comment type="catalytic activity">
    <reaction evidence="1">
        <text>Endonucleolytic cleavage to 5'-phosphomonoester.</text>
        <dbReference type="EC" id="3.1.26.3"/>
    </reaction>
</comment>
<comment type="cofactor">
    <cofactor evidence="1">
        <name>Mg(2+)</name>
        <dbReference type="ChEBI" id="CHEBI:18420"/>
    </cofactor>
</comment>
<comment type="subunit">
    <text evidence="1">Homodimer.</text>
</comment>
<comment type="subcellular location">
    <subcellularLocation>
        <location evidence="1">Cytoplasm</location>
    </subcellularLocation>
</comment>
<comment type="similarity">
    <text evidence="1">Belongs to the ribonuclease III family.</text>
</comment>
<name>RNC_SYMTH</name>
<evidence type="ECO:0000255" key="1">
    <source>
        <dbReference type="HAMAP-Rule" id="MF_00104"/>
    </source>
</evidence>
<reference key="1">
    <citation type="journal article" date="2004" name="Nucleic Acids Res.">
        <title>Genome sequence of Symbiobacterium thermophilum, an uncultivable bacterium that depends on microbial commensalism.</title>
        <authorList>
            <person name="Ueda K."/>
            <person name="Yamashita A."/>
            <person name="Ishikawa J."/>
            <person name="Shimada M."/>
            <person name="Watsuji T."/>
            <person name="Morimura K."/>
            <person name="Ikeda H."/>
            <person name="Hattori M."/>
            <person name="Beppu T."/>
        </authorList>
    </citation>
    <scope>NUCLEOTIDE SEQUENCE [LARGE SCALE GENOMIC DNA]</scope>
    <source>
        <strain>DSM 24528 / JCM 14929 / IAM 14863 / T</strain>
    </source>
</reference>
<feature type="chain" id="PRO_0000228595" description="Ribonuclease 3">
    <location>
        <begin position="1"/>
        <end position="235"/>
    </location>
</feature>
<feature type="domain" description="RNase III" evidence="1">
    <location>
        <begin position="11"/>
        <end position="137"/>
    </location>
</feature>
<feature type="domain" description="DRBM" evidence="1">
    <location>
        <begin position="164"/>
        <end position="233"/>
    </location>
</feature>
<feature type="active site" evidence="1">
    <location>
        <position position="55"/>
    </location>
</feature>
<feature type="active site" evidence="1">
    <location>
        <position position="126"/>
    </location>
</feature>
<feature type="binding site" evidence="1">
    <location>
        <position position="51"/>
    </location>
    <ligand>
        <name>Mg(2+)</name>
        <dbReference type="ChEBI" id="CHEBI:18420"/>
    </ligand>
</feature>
<feature type="binding site" evidence="1">
    <location>
        <position position="123"/>
    </location>
    <ligand>
        <name>Mg(2+)</name>
        <dbReference type="ChEBI" id="CHEBI:18420"/>
    </ligand>
</feature>
<feature type="binding site" evidence="1">
    <location>
        <position position="126"/>
    </location>
    <ligand>
        <name>Mg(2+)</name>
        <dbReference type="ChEBI" id="CHEBI:18420"/>
    </ligand>
</feature>
<organism>
    <name type="scientific">Symbiobacterium thermophilum (strain DSM 24528 / JCM 14929 / IAM 14863 / T)</name>
    <dbReference type="NCBI Taxonomy" id="292459"/>
    <lineage>
        <taxon>Bacteria</taxon>
        <taxon>Bacillati</taxon>
        <taxon>Bacillota</taxon>
        <taxon>Clostridia</taxon>
        <taxon>Eubacteriales</taxon>
        <taxon>Symbiobacteriaceae</taxon>
        <taxon>Symbiobacterium</taxon>
    </lineage>
</organism>
<accession>Q67PF5</accession>
<protein>
    <recommendedName>
        <fullName evidence="1">Ribonuclease 3</fullName>
        <ecNumber evidence="1">3.1.26.3</ecNumber>
    </recommendedName>
    <alternativeName>
        <fullName evidence="1">Ribonuclease III</fullName>
        <shortName evidence="1">RNase III</shortName>
    </alternativeName>
</protein>
<dbReference type="EC" id="3.1.26.3" evidence="1"/>
<dbReference type="EMBL" id="AP006840">
    <property type="protein sequence ID" value="BAD40438.1"/>
    <property type="molecule type" value="Genomic_DNA"/>
</dbReference>
<dbReference type="RefSeq" id="WP_011195583.1">
    <property type="nucleotide sequence ID" value="NC_006177.1"/>
</dbReference>
<dbReference type="SMR" id="Q67PF5"/>
<dbReference type="STRING" id="292459.STH1453"/>
<dbReference type="KEGG" id="sth:STH1453"/>
<dbReference type="eggNOG" id="COG0571">
    <property type="taxonomic scope" value="Bacteria"/>
</dbReference>
<dbReference type="HOGENOM" id="CLU_000907_1_3_9"/>
<dbReference type="OrthoDB" id="9805026at2"/>
<dbReference type="Proteomes" id="UP000000417">
    <property type="component" value="Chromosome"/>
</dbReference>
<dbReference type="GO" id="GO:0005737">
    <property type="term" value="C:cytoplasm"/>
    <property type="evidence" value="ECO:0007669"/>
    <property type="project" value="UniProtKB-SubCell"/>
</dbReference>
<dbReference type="GO" id="GO:0003725">
    <property type="term" value="F:double-stranded RNA binding"/>
    <property type="evidence" value="ECO:0007669"/>
    <property type="project" value="TreeGrafter"/>
</dbReference>
<dbReference type="GO" id="GO:0046872">
    <property type="term" value="F:metal ion binding"/>
    <property type="evidence" value="ECO:0007669"/>
    <property type="project" value="UniProtKB-KW"/>
</dbReference>
<dbReference type="GO" id="GO:0004525">
    <property type="term" value="F:ribonuclease III activity"/>
    <property type="evidence" value="ECO:0007669"/>
    <property type="project" value="UniProtKB-UniRule"/>
</dbReference>
<dbReference type="GO" id="GO:0019843">
    <property type="term" value="F:rRNA binding"/>
    <property type="evidence" value="ECO:0007669"/>
    <property type="project" value="UniProtKB-KW"/>
</dbReference>
<dbReference type="GO" id="GO:0006397">
    <property type="term" value="P:mRNA processing"/>
    <property type="evidence" value="ECO:0007669"/>
    <property type="project" value="UniProtKB-UniRule"/>
</dbReference>
<dbReference type="GO" id="GO:0010468">
    <property type="term" value="P:regulation of gene expression"/>
    <property type="evidence" value="ECO:0007669"/>
    <property type="project" value="TreeGrafter"/>
</dbReference>
<dbReference type="GO" id="GO:0006364">
    <property type="term" value="P:rRNA processing"/>
    <property type="evidence" value="ECO:0007669"/>
    <property type="project" value="UniProtKB-UniRule"/>
</dbReference>
<dbReference type="GO" id="GO:0008033">
    <property type="term" value="P:tRNA processing"/>
    <property type="evidence" value="ECO:0007669"/>
    <property type="project" value="UniProtKB-KW"/>
</dbReference>
<dbReference type="CDD" id="cd10845">
    <property type="entry name" value="DSRM_RNAse_III_family"/>
    <property type="match status" value="1"/>
</dbReference>
<dbReference type="CDD" id="cd00593">
    <property type="entry name" value="RIBOc"/>
    <property type="match status" value="1"/>
</dbReference>
<dbReference type="FunFam" id="1.10.1520.10:FF:000001">
    <property type="entry name" value="Ribonuclease 3"/>
    <property type="match status" value="1"/>
</dbReference>
<dbReference type="FunFam" id="3.30.160.20:FF:000003">
    <property type="entry name" value="Ribonuclease 3"/>
    <property type="match status" value="1"/>
</dbReference>
<dbReference type="Gene3D" id="3.30.160.20">
    <property type="match status" value="1"/>
</dbReference>
<dbReference type="Gene3D" id="1.10.1520.10">
    <property type="entry name" value="Ribonuclease III domain"/>
    <property type="match status" value="1"/>
</dbReference>
<dbReference type="HAMAP" id="MF_00104">
    <property type="entry name" value="RNase_III"/>
    <property type="match status" value="1"/>
</dbReference>
<dbReference type="InterPro" id="IPR014720">
    <property type="entry name" value="dsRBD_dom"/>
</dbReference>
<dbReference type="InterPro" id="IPR011907">
    <property type="entry name" value="RNase_III"/>
</dbReference>
<dbReference type="InterPro" id="IPR000999">
    <property type="entry name" value="RNase_III_dom"/>
</dbReference>
<dbReference type="InterPro" id="IPR036389">
    <property type="entry name" value="RNase_III_sf"/>
</dbReference>
<dbReference type="NCBIfam" id="TIGR02191">
    <property type="entry name" value="RNaseIII"/>
    <property type="match status" value="1"/>
</dbReference>
<dbReference type="PANTHER" id="PTHR11207:SF0">
    <property type="entry name" value="RIBONUCLEASE 3"/>
    <property type="match status" value="1"/>
</dbReference>
<dbReference type="PANTHER" id="PTHR11207">
    <property type="entry name" value="RIBONUCLEASE III"/>
    <property type="match status" value="1"/>
</dbReference>
<dbReference type="Pfam" id="PF00035">
    <property type="entry name" value="dsrm"/>
    <property type="match status" value="1"/>
</dbReference>
<dbReference type="Pfam" id="PF14622">
    <property type="entry name" value="Ribonucleas_3_3"/>
    <property type="match status" value="1"/>
</dbReference>
<dbReference type="SMART" id="SM00358">
    <property type="entry name" value="DSRM"/>
    <property type="match status" value="1"/>
</dbReference>
<dbReference type="SMART" id="SM00535">
    <property type="entry name" value="RIBOc"/>
    <property type="match status" value="1"/>
</dbReference>
<dbReference type="SUPFAM" id="SSF54768">
    <property type="entry name" value="dsRNA-binding domain-like"/>
    <property type="match status" value="1"/>
</dbReference>
<dbReference type="SUPFAM" id="SSF69065">
    <property type="entry name" value="RNase III domain-like"/>
    <property type="match status" value="1"/>
</dbReference>
<dbReference type="PROSITE" id="PS50137">
    <property type="entry name" value="DS_RBD"/>
    <property type="match status" value="1"/>
</dbReference>
<dbReference type="PROSITE" id="PS00517">
    <property type="entry name" value="RNASE_3_1"/>
    <property type="match status" value="1"/>
</dbReference>
<dbReference type="PROSITE" id="PS50142">
    <property type="entry name" value="RNASE_3_2"/>
    <property type="match status" value="1"/>
</dbReference>